<keyword id="KW-0963">Cytoplasm</keyword>
<keyword id="KW-0378">Hydrolase</keyword>
<keyword id="KW-0540">Nuclease</keyword>
<keyword id="KW-1185">Reference proteome</keyword>
<keyword id="KW-0690">Ribosome biogenesis</keyword>
<dbReference type="EC" id="3.1.-.-" evidence="1"/>
<dbReference type="EMBL" id="AE004439">
    <property type="protein sequence ID" value="AAK03954.1"/>
    <property type="molecule type" value="Genomic_DNA"/>
</dbReference>
<dbReference type="SMR" id="Q9CJX0"/>
<dbReference type="STRING" id="272843.PM1870"/>
<dbReference type="EnsemblBacteria" id="AAK03954">
    <property type="protein sequence ID" value="AAK03954"/>
    <property type="gene ID" value="PM1870"/>
</dbReference>
<dbReference type="KEGG" id="pmu:PM1870"/>
<dbReference type="HOGENOM" id="CLU_098240_3_0_6"/>
<dbReference type="OrthoDB" id="9796140at2"/>
<dbReference type="Proteomes" id="UP000000809">
    <property type="component" value="Chromosome"/>
</dbReference>
<dbReference type="GO" id="GO:0005829">
    <property type="term" value="C:cytosol"/>
    <property type="evidence" value="ECO:0007669"/>
    <property type="project" value="TreeGrafter"/>
</dbReference>
<dbReference type="GO" id="GO:0004518">
    <property type="term" value="F:nuclease activity"/>
    <property type="evidence" value="ECO:0007669"/>
    <property type="project" value="UniProtKB-KW"/>
</dbReference>
<dbReference type="GO" id="GO:0000967">
    <property type="term" value="P:rRNA 5'-end processing"/>
    <property type="evidence" value="ECO:0007669"/>
    <property type="project" value="UniProtKB-UniRule"/>
</dbReference>
<dbReference type="CDD" id="cd16964">
    <property type="entry name" value="YqgF"/>
    <property type="match status" value="1"/>
</dbReference>
<dbReference type="FunFam" id="3.30.420.140:FF:000002">
    <property type="entry name" value="Putative pre-16S rRNA nuclease"/>
    <property type="match status" value="1"/>
</dbReference>
<dbReference type="Gene3D" id="3.30.420.140">
    <property type="entry name" value="YqgF/RNase H-like domain"/>
    <property type="match status" value="1"/>
</dbReference>
<dbReference type="HAMAP" id="MF_00651">
    <property type="entry name" value="Nuclease_YqgF"/>
    <property type="match status" value="1"/>
</dbReference>
<dbReference type="InterPro" id="IPR012337">
    <property type="entry name" value="RNaseH-like_sf"/>
</dbReference>
<dbReference type="InterPro" id="IPR005227">
    <property type="entry name" value="YqgF"/>
</dbReference>
<dbReference type="InterPro" id="IPR006641">
    <property type="entry name" value="YqgF/RNaseH-like_dom"/>
</dbReference>
<dbReference type="InterPro" id="IPR037027">
    <property type="entry name" value="YqgF/RNaseH-like_dom_sf"/>
</dbReference>
<dbReference type="NCBIfam" id="TIGR00250">
    <property type="entry name" value="RNAse_H_YqgF"/>
    <property type="match status" value="1"/>
</dbReference>
<dbReference type="PANTHER" id="PTHR33317">
    <property type="entry name" value="POLYNUCLEOTIDYL TRANSFERASE, RIBONUCLEASE H-LIKE SUPERFAMILY PROTEIN"/>
    <property type="match status" value="1"/>
</dbReference>
<dbReference type="PANTHER" id="PTHR33317:SF4">
    <property type="entry name" value="POLYNUCLEOTIDYL TRANSFERASE, RIBONUCLEASE H-LIKE SUPERFAMILY PROTEIN"/>
    <property type="match status" value="1"/>
</dbReference>
<dbReference type="Pfam" id="PF03652">
    <property type="entry name" value="RuvX"/>
    <property type="match status" value="1"/>
</dbReference>
<dbReference type="SMART" id="SM00732">
    <property type="entry name" value="YqgFc"/>
    <property type="match status" value="1"/>
</dbReference>
<dbReference type="SUPFAM" id="SSF53098">
    <property type="entry name" value="Ribonuclease H-like"/>
    <property type="match status" value="1"/>
</dbReference>
<name>YQGF_PASMU</name>
<feature type="chain" id="PRO_0000172110" description="Putative pre-16S rRNA nuclease">
    <location>
        <begin position="1"/>
        <end position="140"/>
    </location>
</feature>
<gene>
    <name type="ordered locus">PM1870</name>
</gene>
<comment type="function">
    <text evidence="1">Could be a nuclease involved in processing of the 5'-end of pre-16S rRNA.</text>
</comment>
<comment type="subcellular location">
    <subcellularLocation>
        <location evidence="1">Cytoplasm</location>
    </subcellularLocation>
</comment>
<comment type="similarity">
    <text evidence="1">Belongs to the YqgF nuclease family.</text>
</comment>
<proteinExistence type="inferred from homology"/>
<protein>
    <recommendedName>
        <fullName evidence="1">Putative pre-16S rRNA nuclease</fullName>
        <ecNumber evidence="1">3.1.-.-</ecNumber>
    </recommendedName>
</protein>
<organism>
    <name type="scientific">Pasteurella multocida (strain Pm70)</name>
    <dbReference type="NCBI Taxonomy" id="272843"/>
    <lineage>
        <taxon>Bacteria</taxon>
        <taxon>Pseudomonadati</taxon>
        <taxon>Pseudomonadota</taxon>
        <taxon>Gammaproteobacteria</taxon>
        <taxon>Pasteurellales</taxon>
        <taxon>Pasteurellaceae</taxon>
        <taxon>Pasteurella</taxon>
    </lineage>
</organism>
<reference key="1">
    <citation type="journal article" date="2001" name="Proc. Natl. Acad. Sci. U.S.A.">
        <title>Complete genomic sequence of Pasteurella multocida Pm70.</title>
        <authorList>
            <person name="May B.J."/>
            <person name="Zhang Q."/>
            <person name="Li L.L."/>
            <person name="Paustian M.L."/>
            <person name="Whittam T.S."/>
            <person name="Kapur V."/>
        </authorList>
    </citation>
    <scope>NUCLEOTIDE SEQUENCE [LARGE SCALE GENOMIC DNA]</scope>
    <source>
        <strain>Pm70</strain>
    </source>
</reference>
<evidence type="ECO:0000255" key="1">
    <source>
        <dbReference type="HAMAP-Rule" id="MF_00651"/>
    </source>
</evidence>
<accession>Q9CJX0</accession>
<sequence>MGMTVLAFDFGTKSIGCAVGQSITGTAQALPAFKAQDGIPNWDAIGKCLAEWQPDRVVVGLPLNMDGTEQDLTVRARKFAHRLHGRFGVAVELQDERLTTTEARAEIFGRGGYKALNKSKVDGISACLILESWFENQQVK</sequence>